<accession>Q8ZIX3</accession>
<accession>Q0WJU8</accession>
<feature type="chain" id="PRO_0000152734" description="Elongation factor P--(R)-beta-lysine ligase">
    <location>
        <begin position="1"/>
        <end position="325"/>
    </location>
</feature>
<feature type="binding site" evidence="1">
    <location>
        <begin position="76"/>
        <end position="78"/>
    </location>
    <ligand>
        <name>substrate</name>
    </ligand>
</feature>
<feature type="binding site" evidence="1">
    <location>
        <begin position="100"/>
        <end position="102"/>
    </location>
    <ligand>
        <name>ATP</name>
        <dbReference type="ChEBI" id="CHEBI:30616"/>
    </ligand>
</feature>
<feature type="binding site" evidence="1">
    <location>
        <position position="109"/>
    </location>
    <ligand>
        <name>ATP</name>
        <dbReference type="ChEBI" id="CHEBI:30616"/>
    </ligand>
</feature>
<feature type="binding site" evidence="1">
    <location>
        <position position="118"/>
    </location>
    <ligand>
        <name>substrate</name>
    </ligand>
</feature>
<feature type="binding site" evidence="1">
    <location>
        <begin position="244"/>
        <end position="245"/>
    </location>
    <ligand>
        <name>ATP</name>
        <dbReference type="ChEBI" id="CHEBI:30616"/>
    </ligand>
</feature>
<feature type="binding site" evidence="1">
    <location>
        <position position="251"/>
    </location>
    <ligand>
        <name>substrate</name>
    </ligand>
</feature>
<feature type="binding site" evidence="1">
    <location>
        <position position="300"/>
    </location>
    <ligand>
        <name>ATP</name>
        <dbReference type="ChEBI" id="CHEBI:30616"/>
    </ligand>
</feature>
<evidence type="ECO:0000255" key="1">
    <source>
        <dbReference type="HAMAP-Rule" id="MF_00174"/>
    </source>
</evidence>
<evidence type="ECO:0000305" key="2"/>
<organism>
    <name type="scientific">Yersinia pestis</name>
    <dbReference type="NCBI Taxonomy" id="632"/>
    <lineage>
        <taxon>Bacteria</taxon>
        <taxon>Pseudomonadati</taxon>
        <taxon>Pseudomonadota</taxon>
        <taxon>Gammaproteobacteria</taxon>
        <taxon>Enterobacterales</taxon>
        <taxon>Yersiniaceae</taxon>
        <taxon>Yersinia</taxon>
    </lineage>
</organism>
<comment type="function">
    <text evidence="1">With EpmB is involved in the beta-lysylation step of the post-translational modification of translation elongation factor P (EF-P). Catalyzes the ATP-dependent activation of (R)-beta-lysine produced by EpmB, forming a lysyl-adenylate, from which the beta-lysyl moiety is then transferred to the epsilon-amino group of a conserved specific lysine residue in EF-P.</text>
</comment>
<comment type="catalytic activity">
    <reaction evidence="1">
        <text>D-beta-lysine + L-lysyl-[protein] + ATP = N(6)-((3R)-3,6-diaminohexanoyl)-L-lysyl-[protein] + AMP + diphosphate + H(+)</text>
        <dbReference type="Rhea" id="RHEA:83435"/>
        <dbReference type="Rhea" id="RHEA-COMP:9752"/>
        <dbReference type="Rhea" id="RHEA-COMP:20131"/>
        <dbReference type="ChEBI" id="CHEBI:15378"/>
        <dbReference type="ChEBI" id="CHEBI:29969"/>
        <dbReference type="ChEBI" id="CHEBI:30616"/>
        <dbReference type="ChEBI" id="CHEBI:33019"/>
        <dbReference type="ChEBI" id="CHEBI:84138"/>
        <dbReference type="ChEBI" id="CHEBI:156053"/>
        <dbReference type="ChEBI" id="CHEBI:456215"/>
    </reaction>
    <physiologicalReaction direction="left-to-right" evidence="1">
        <dbReference type="Rhea" id="RHEA:83436"/>
    </physiologicalReaction>
</comment>
<comment type="subunit">
    <text evidence="1">Homodimer.</text>
</comment>
<comment type="similarity">
    <text evidence="1">Belongs to the class-II aminoacyl-tRNA synthetase family. EpmA subfamily.</text>
</comment>
<comment type="sequence caution" evidence="2">
    <conflict type="erroneous initiation">
        <sequence resource="EMBL-CDS" id="AAM84206"/>
    </conflict>
    <text>Extended N-terminus.</text>
</comment>
<proteinExistence type="inferred from homology"/>
<dbReference type="EC" id="6.3.2.-" evidence="1"/>
<dbReference type="EMBL" id="AL590842">
    <property type="protein sequence ID" value="CAL19044.1"/>
    <property type="molecule type" value="Genomic_DNA"/>
</dbReference>
<dbReference type="EMBL" id="AE009952">
    <property type="protein sequence ID" value="AAM84206.1"/>
    <property type="status" value="ALT_INIT"/>
    <property type="molecule type" value="Genomic_DNA"/>
</dbReference>
<dbReference type="EMBL" id="AE017042">
    <property type="protein sequence ID" value="AAS60787.1"/>
    <property type="molecule type" value="Genomic_DNA"/>
</dbReference>
<dbReference type="PIR" id="AB0045">
    <property type="entry name" value="AB0045"/>
</dbReference>
<dbReference type="RefSeq" id="WP_002209139.1">
    <property type="nucleotide sequence ID" value="NZ_WUCM01000014.1"/>
</dbReference>
<dbReference type="RefSeq" id="YP_002345440.1">
    <property type="nucleotide sequence ID" value="NC_003143.1"/>
</dbReference>
<dbReference type="SMR" id="Q8ZIX3"/>
<dbReference type="IntAct" id="Q8ZIX3">
    <property type="interactions" value="2"/>
</dbReference>
<dbReference type="STRING" id="214092.YPO0362"/>
<dbReference type="PaxDb" id="214092-YPO0362"/>
<dbReference type="EnsemblBacteria" id="AAS60787">
    <property type="protein sequence ID" value="AAS60787"/>
    <property type="gene ID" value="YP_0517"/>
</dbReference>
<dbReference type="GeneID" id="57974246"/>
<dbReference type="KEGG" id="ype:YPO0362"/>
<dbReference type="KEGG" id="ypk:y0618"/>
<dbReference type="KEGG" id="ypm:YP_0517"/>
<dbReference type="PATRIC" id="fig|214092.21.peg.597"/>
<dbReference type="eggNOG" id="COG2269">
    <property type="taxonomic scope" value="Bacteria"/>
</dbReference>
<dbReference type="HOGENOM" id="CLU_008255_1_1_6"/>
<dbReference type="OMA" id="EWYRPGF"/>
<dbReference type="OrthoDB" id="9802326at2"/>
<dbReference type="Proteomes" id="UP000000815">
    <property type="component" value="Chromosome"/>
</dbReference>
<dbReference type="Proteomes" id="UP000001019">
    <property type="component" value="Chromosome"/>
</dbReference>
<dbReference type="Proteomes" id="UP000002490">
    <property type="component" value="Chromosome"/>
</dbReference>
<dbReference type="GO" id="GO:0005737">
    <property type="term" value="C:cytoplasm"/>
    <property type="evidence" value="ECO:0000318"/>
    <property type="project" value="GO_Central"/>
</dbReference>
<dbReference type="GO" id="GO:0016880">
    <property type="term" value="F:acid-ammonia (or amide) ligase activity"/>
    <property type="evidence" value="ECO:0007669"/>
    <property type="project" value="UniProtKB-UniRule"/>
</dbReference>
<dbReference type="GO" id="GO:0005524">
    <property type="term" value="F:ATP binding"/>
    <property type="evidence" value="ECO:0007669"/>
    <property type="project" value="UniProtKB-UniRule"/>
</dbReference>
<dbReference type="GO" id="GO:0004824">
    <property type="term" value="F:lysine-tRNA ligase activity"/>
    <property type="evidence" value="ECO:0000318"/>
    <property type="project" value="GO_Central"/>
</dbReference>
<dbReference type="GO" id="GO:0000049">
    <property type="term" value="F:tRNA binding"/>
    <property type="evidence" value="ECO:0000318"/>
    <property type="project" value="GO_Central"/>
</dbReference>
<dbReference type="GO" id="GO:0006430">
    <property type="term" value="P:lysyl-tRNA aminoacylation"/>
    <property type="evidence" value="ECO:0000318"/>
    <property type="project" value="GO_Central"/>
</dbReference>
<dbReference type="FunFam" id="3.30.930.10:FF:000017">
    <property type="entry name" value="Elongation factor P--(R)-beta-lysine ligase"/>
    <property type="match status" value="1"/>
</dbReference>
<dbReference type="Gene3D" id="3.30.930.10">
    <property type="entry name" value="Bira Bifunctional Protein, Domain 2"/>
    <property type="match status" value="1"/>
</dbReference>
<dbReference type="HAMAP" id="MF_00174">
    <property type="entry name" value="EF_P_modif_A"/>
    <property type="match status" value="1"/>
</dbReference>
<dbReference type="InterPro" id="IPR004364">
    <property type="entry name" value="Aa-tRNA-synt_II"/>
</dbReference>
<dbReference type="InterPro" id="IPR006195">
    <property type="entry name" value="aa-tRNA-synth_II"/>
</dbReference>
<dbReference type="InterPro" id="IPR045864">
    <property type="entry name" value="aa-tRNA-synth_II/BPL/LPL"/>
</dbReference>
<dbReference type="InterPro" id="IPR004525">
    <property type="entry name" value="EpmA"/>
</dbReference>
<dbReference type="InterPro" id="IPR018149">
    <property type="entry name" value="Lys-tRNA-synth_II_C"/>
</dbReference>
<dbReference type="NCBIfam" id="TIGR00462">
    <property type="entry name" value="genX"/>
    <property type="match status" value="1"/>
</dbReference>
<dbReference type="NCBIfam" id="NF006828">
    <property type="entry name" value="PRK09350.1"/>
    <property type="match status" value="1"/>
</dbReference>
<dbReference type="PANTHER" id="PTHR42918:SF6">
    <property type="entry name" value="ELONGATION FACTOR P--(R)-BETA-LYSINE LIGASE"/>
    <property type="match status" value="1"/>
</dbReference>
<dbReference type="PANTHER" id="PTHR42918">
    <property type="entry name" value="LYSYL-TRNA SYNTHETASE"/>
    <property type="match status" value="1"/>
</dbReference>
<dbReference type="Pfam" id="PF00152">
    <property type="entry name" value="tRNA-synt_2"/>
    <property type="match status" value="1"/>
</dbReference>
<dbReference type="PRINTS" id="PR00982">
    <property type="entry name" value="TRNASYNTHLYS"/>
</dbReference>
<dbReference type="SUPFAM" id="SSF55681">
    <property type="entry name" value="Class II aaRS and biotin synthetases"/>
    <property type="match status" value="1"/>
</dbReference>
<dbReference type="PROSITE" id="PS50862">
    <property type="entry name" value="AA_TRNA_LIGASE_II"/>
    <property type="match status" value="1"/>
</dbReference>
<sequence>MSDTASWQPSAPIANLLKRAAIMAEIRRFFADRGVLEVETPTMSQATVTDIHLVPFETRFVGPGAADGLTLYMMTSPEYHMKRLLAAGSGPIYQLGRSFRNEEAGRYHNPEFTMLEWYRPHYDMYRLMNEVDDLLQQILDCNSAETLSYQQAFLRHLNIDPLSAEKAQLREVAAKLDLSNIADTEEDRDTLLQLLFTVGVEPYIGRDKPAFIYHFPASQASLAEISTEDHRVAERFEVYFKGIELANGFRELTDGDEQLQRFEQDNRNRAKRGLPQNPIDMNLIAALKQGLPDCSGVALGVDRLVMLALNAERLSDVIAFPVNIA</sequence>
<keyword id="KW-0067">ATP-binding</keyword>
<keyword id="KW-0436">Ligase</keyword>
<keyword id="KW-0547">Nucleotide-binding</keyword>
<keyword id="KW-1185">Reference proteome</keyword>
<name>EPMA_YERPE</name>
<gene>
    <name evidence="1" type="primary">epmA</name>
    <name type="synonym">yjeA</name>
    <name type="ordered locus">YPO0362</name>
    <name type="ordered locus">y0618</name>
    <name type="ordered locus">YP_0517</name>
</gene>
<reference key="1">
    <citation type="journal article" date="2001" name="Nature">
        <title>Genome sequence of Yersinia pestis, the causative agent of plague.</title>
        <authorList>
            <person name="Parkhill J."/>
            <person name="Wren B.W."/>
            <person name="Thomson N.R."/>
            <person name="Titball R.W."/>
            <person name="Holden M.T.G."/>
            <person name="Prentice M.B."/>
            <person name="Sebaihia M."/>
            <person name="James K.D."/>
            <person name="Churcher C.M."/>
            <person name="Mungall K.L."/>
            <person name="Baker S."/>
            <person name="Basham D."/>
            <person name="Bentley S.D."/>
            <person name="Brooks K."/>
            <person name="Cerdeno-Tarraga A.-M."/>
            <person name="Chillingworth T."/>
            <person name="Cronin A."/>
            <person name="Davies R.M."/>
            <person name="Davis P."/>
            <person name="Dougan G."/>
            <person name="Feltwell T."/>
            <person name="Hamlin N."/>
            <person name="Holroyd S."/>
            <person name="Jagels K."/>
            <person name="Karlyshev A.V."/>
            <person name="Leather S."/>
            <person name="Moule S."/>
            <person name="Oyston P.C.F."/>
            <person name="Quail M.A."/>
            <person name="Rutherford K.M."/>
            <person name="Simmonds M."/>
            <person name="Skelton J."/>
            <person name="Stevens K."/>
            <person name="Whitehead S."/>
            <person name="Barrell B.G."/>
        </authorList>
    </citation>
    <scope>NUCLEOTIDE SEQUENCE [LARGE SCALE GENOMIC DNA]</scope>
    <source>
        <strain>CO-92 / Biovar Orientalis</strain>
    </source>
</reference>
<reference key="2">
    <citation type="journal article" date="2002" name="J. Bacteriol.">
        <title>Genome sequence of Yersinia pestis KIM.</title>
        <authorList>
            <person name="Deng W."/>
            <person name="Burland V."/>
            <person name="Plunkett G. III"/>
            <person name="Boutin A."/>
            <person name="Mayhew G.F."/>
            <person name="Liss P."/>
            <person name="Perna N.T."/>
            <person name="Rose D.J."/>
            <person name="Mau B."/>
            <person name="Zhou S."/>
            <person name="Schwartz D.C."/>
            <person name="Fetherston J.D."/>
            <person name="Lindler L.E."/>
            <person name="Brubaker R.R."/>
            <person name="Plano G.V."/>
            <person name="Straley S.C."/>
            <person name="McDonough K.A."/>
            <person name="Nilles M.L."/>
            <person name="Matson J.S."/>
            <person name="Blattner F.R."/>
            <person name="Perry R.D."/>
        </authorList>
    </citation>
    <scope>NUCLEOTIDE SEQUENCE [LARGE SCALE GENOMIC DNA]</scope>
    <source>
        <strain>KIM10+ / Biovar Mediaevalis</strain>
    </source>
</reference>
<reference key="3">
    <citation type="journal article" date="2004" name="DNA Res.">
        <title>Complete genome sequence of Yersinia pestis strain 91001, an isolate avirulent to humans.</title>
        <authorList>
            <person name="Song Y."/>
            <person name="Tong Z."/>
            <person name="Wang J."/>
            <person name="Wang L."/>
            <person name="Guo Z."/>
            <person name="Han Y."/>
            <person name="Zhang J."/>
            <person name="Pei D."/>
            <person name="Zhou D."/>
            <person name="Qin H."/>
            <person name="Pang X."/>
            <person name="Han Y."/>
            <person name="Zhai J."/>
            <person name="Li M."/>
            <person name="Cui B."/>
            <person name="Qi Z."/>
            <person name="Jin L."/>
            <person name="Dai R."/>
            <person name="Chen F."/>
            <person name="Li S."/>
            <person name="Ye C."/>
            <person name="Du Z."/>
            <person name="Lin W."/>
            <person name="Wang J."/>
            <person name="Yu J."/>
            <person name="Yang H."/>
            <person name="Wang J."/>
            <person name="Huang P."/>
            <person name="Yang R."/>
        </authorList>
    </citation>
    <scope>NUCLEOTIDE SEQUENCE [LARGE SCALE GENOMIC DNA]</scope>
    <source>
        <strain>91001 / Biovar Mediaevalis</strain>
    </source>
</reference>
<protein>
    <recommendedName>
        <fullName evidence="1">Elongation factor P--(R)-beta-lysine ligase</fullName>
        <shortName evidence="1">EF-P--(R)-beta-lysine ligase</shortName>
        <ecNumber evidence="1">6.3.2.-</ecNumber>
    </recommendedName>
    <alternativeName>
        <fullName evidence="1">EF-P post-translational modification enzyme A</fullName>
    </alternativeName>
    <alternativeName>
        <fullName evidence="1">EF-P-lysine lysyltransferase</fullName>
    </alternativeName>
</protein>